<organism>
    <name type="scientific">Synechocystis sp. (strain ATCC 27184 / PCC 6803 / Kazusa)</name>
    <dbReference type="NCBI Taxonomy" id="1111708"/>
    <lineage>
        <taxon>Bacteria</taxon>
        <taxon>Bacillati</taxon>
        <taxon>Cyanobacteriota</taxon>
        <taxon>Cyanophyceae</taxon>
        <taxon>Synechococcales</taxon>
        <taxon>Merismopediaceae</taxon>
        <taxon>Synechocystis</taxon>
    </lineage>
</organism>
<feature type="chain" id="PRO_0000072876" description="Glycine--tRNA ligase alpha subunit">
    <location>
        <begin position="1"/>
        <end position="299"/>
    </location>
</feature>
<evidence type="ECO:0000250" key="1"/>
<evidence type="ECO:0000305" key="2"/>
<gene>
    <name type="primary">glyQ</name>
    <name type="ordered locus">slr0638</name>
</gene>
<keyword id="KW-0030">Aminoacyl-tRNA synthetase</keyword>
<keyword id="KW-0067">ATP-binding</keyword>
<keyword id="KW-0963">Cytoplasm</keyword>
<keyword id="KW-0436">Ligase</keyword>
<keyword id="KW-0547">Nucleotide-binding</keyword>
<keyword id="KW-0648">Protein biosynthesis</keyword>
<keyword id="KW-1185">Reference proteome</keyword>
<proteinExistence type="inferred from homology"/>
<reference key="1">
    <citation type="journal article" date="1995" name="DNA Res.">
        <title>Sequence analysis of the genome of the unicellular cyanobacterium Synechocystis sp. strain PCC6803. I. Sequence features in the 1 Mb region from map positions 64% to 92% of the genome.</title>
        <authorList>
            <person name="Kaneko T."/>
            <person name="Tanaka A."/>
            <person name="Sato S."/>
            <person name="Kotani H."/>
            <person name="Sazuka T."/>
            <person name="Miyajima N."/>
            <person name="Sugiura M."/>
            <person name="Tabata S."/>
        </authorList>
    </citation>
    <scope>NUCLEOTIDE SEQUENCE [LARGE SCALE GENOMIC DNA]</scope>
    <source>
        <strain>ATCC 27184 / PCC 6803 / N-1</strain>
    </source>
</reference>
<reference key="2">
    <citation type="journal article" date="1996" name="DNA Res.">
        <title>Sequence analysis of the genome of the unicellular cyanobacterium Synechocystis sp. strain PCC6803. II. Sequence determination of the entire genome and assignment of potential protein-coding regions.</title>
        <authorList>
            <person name="Kaneko T."/>
            <person name="Sato S."/>
            <person name="Kotani H."/>
            <person name="Tanaka A."/>
            <person name="Asamizu E."/>
            <person name="Nakamura Y."/>
            <person name="Miyajima N."/>
            <person name="Hirosawa M."/>
            <person name="Sugiura M."/>
            <person name="Sasamoto S."/>
            <person name="Kimura T."/>
            <person name="Hosouchi T."/>
            <person name="Matsuno A."/>
            <person name="Muraki A."/>
            <person name="Nakazaki N."/>
            <person name="Naruo K."/>
            <person name="Okumura S."/>
            <person name="Shimpo S."/>
            <person name="Takeuchi C."/>
            <person name="Wada T."/>
            <person name="Watanabe A."/>
            <person name="Yamada M."/>
            <person name="Yasuda M."/>
            <person name="Tabata S."/>
        </authorList>
    </citation>
    <scope>NUCLEOTIDE SEQUENCE [LARGE SCALE GENOMIC DNA]</scope>
    <source>
        <strain>ATCC 27184 / PCC 6803 / Kazusa</strain>
    </source>
</reference>
<accession>Q55716</accession>
<name>SYGA_SYNY3</name>
<dbReference type="EC" id="6.1.1.14"/>
<dbReference type="EMBL" id="BA000022">
    <property type="protein sequence ID" value="BAA10357.1"/>
    <property type="molecule type" value="Genomic_DNA"/>
</dbReference>
<dbReference type="PIR" id="S76511">
    <property type="entry name" value="S76511"/>
</dbReference>
<dbReference type="SMR" id="Q55716"/>
<dbReference type="FunCoup" id="Q55716">
    <property type="interactions" value="190"/>
</dbReference>
<dbReference type="IntAct" id="Q55716">
    <property type="interactions" value="4"/>
</dbReference>
<dbReference type="STRING" id="1148.gene:10499858"/>
<dbReference type="PaxDb" id="1148-1001626"/>
<dbReference type="EnsemblBacteria" id="BAA10357">
    <property type="protein sequence ID" value="BAA10357"/>
    <property type="gene ID" value="BAA10357"/>
</dbReference>
<dbReference type="KEGG" id="syn:slr0638"/>
<dbReference type="eggNOG" id="COG0752">
    <property type="taxonomic scope" value="Bacteria"/>
</dbReference>
<dbReference type="InParanoid" id="Q55716"/>
<dbReference type="PhylomeDB" id="Q55716"/>
<dbReference type="Proteomes" id="UP000001425">
    <property type="component" value="Chromosome"/>
</dbReference>
<dbReference type="GO" id="GO:0005737">
    <property type="term" value="C:cytoplasm"/>
    <property type="evidence" value="ECO:0007669"/>
    <property type="project" value="UniProtKB-SubCell"/>
</dbReference>
<dbReference type="GO" id="GO:0005524">
    <property type="term" value="F:ATP binding"/>
    <property type="evidence" value="ECO:0007669"/>
    <property type="project" value="UniProtKB-UniRule"/>
</dbReference>
<dbReference type="GO" id="GO:0004820">
    <property type="term" value="F:glycine-tRNA ligase activity"/>
    <property type="evidence" value="ECO:0007669"/>
    <property type="project" value="UniProtKB-UniRule"/>
</dbReference>
<dbReference type="GO" id="GO:0006426">
    <property type="term" value="P:glycyl-tRNA aminoacylation"/>
    <property type="evidence" value="ECO:0007669"/>
    <property type="project" value="UniProtKB-UniRule"/>
</dbReference>
<dbReference type="CDD" id="cd00733">
    <property type="entry name" value="GlyRS_alpha_core"/>
    <property type="match status" value="1"/>
</dbReference>
<dbReference type="FunFam" id="3.30.930.10:FF:000006">
    <property type="entry name" value="Glycine--tRNA ligase alpha subunit"/>
    <property type="match status" value="1"/>
</dbReference>
<dbReference type="Gene3D" id="3.30.930.10">
    <property type="entry name" value="Bira Bifunctional Protein, Domain 2"/>
    <property type="match status" value="1"/>
</dbReference>
<dbReference type="Gene3D" id="1.20.58.180">
    <property type="entry name" value="Class II aaRS and biotin synthetases, domain 2"/>
    <property type="match status" value="1"/>
</dbReference>
<dbReference type="HAMAP" id="MF_00254">
    <property type="entry name" value="Gly_tRNA_synth_alpha"/>
    <property type="match status" value="1"/>
</dbReference>
<dbReference type="InterPro" id="IPR045864">
    <property type="entry name" value="aa-tRNA-synth_II/BPL/LPL"/>
</dbReference>
<dbReference type="InterPro" id="IPR006194">
    <property type="entry name" value="Gly-tRNA-synth_heterodimer"/>
</dbReference>
<dbReference type="InterPro" id="IPR002310">
    <property type="entry name" value="Gly-tRNA_ligase_asu"/>
</dbReference>
<dbReference type="NCBIfam" id="TIGR00388">
    <property type="entry name" value="glyQ"/>
    <property type="match status" value="1"/>
</dbReference>
<dbReference type="NCBIfam" id="NF006827">
    <property type="entry name" value="PRK09348.1"/>
    <property type="match status" value="1"/>
</dbReference>
<dbReference type="PANTHER" id="PTHR30075:SF2">
    <property type="entry name" value="GLYCINE--TRNA LIGASE, CHLOROPLASTIC_MITOCHONDRIAL 2"/>
    <property type="match status" value="1"/>
</dbReference>
<dbReference type="PANTHER" id="PTHR30075">
    <property type="entry name" value="GLYCYL-TRNA SYNTHETASE"/>
    <property type="match status" value="1"/>
</dbReference>
<dbReference type="Pfam" id="PF02091">
    <property type="entry name" value="tRNA-synt_2e"/>
    <property type="match status" value="1"/>
</dbReference>
<dbReference type="PRINTS" id="PR01044">
    <property type="entry name" value="TRNASYNTHGA"/>
</dbReference>
<dbReference type="SUPFAM" id="SSF55681">
    <property type="entry name" value="Class II aaRS and biotin synthetases"/>
    <property type="match status" value="1"/>
</dbReference>
<dbReference type="PROSITE" id="PS50861">
    <property type="entry name" value="AA_TRNA_LIGASE_II_GLYAB"/>
    <property type="match status" value="1"/>
</dbReference>
<protein>
    <recommendedName>
        <fullName>Glycine--tRNA ligase alpha subunit</fullName>
        <ecNumber>6.1.1.14</ecNumber>
    </recommendedName>
    <alternativeName>
        <fullName>Glycyl-tRNA synthetase alpha subunit</fullName>
        <shortName>GlyRS</shortName>
    </alternativeName>
</protein>
<sequence length="299" mass="34363">MTITFQAVIAKLNEFWAQQGCLIAQPFDTEKGAGTMNPHTFLRAIGPEPWSVAYVEPCRRPTDGRYGENPNRVQHYFQYQVLIKPSPDNIQEVYLDSLRALGIQPEDHDIRFVEDNWESPTLGAWGVGWEVWLDGMEVTQFTYFQQCGGIDCRPVSIEITYGLERLAMYLQNVEAIDQIQWNEKLSYGDIFWQGEVEQCTYNFEASNPDLLFQLFALYEQEAGQLIERGLALPSLEYVLKCSHAFNLLDARGVIAVTERTRYIGRIRNLAREVAHIYLQQREALGFPLDKKVDKPISLV</sequence>
<comment type="catalytic activity">
    <reaction>
        <text>tRNA(Gly) + glycine + ATP = glycyl-tRNA(Gly) + AMP + diphosphate</text>
        <dbReference type="Rhea" id="RHEA:16013"/>
        <dbReference type="Rhea" id="RHEA-COMP:9664"/>
        <dbReference type="Rhea" id="RHEA-COMP:9683"/>
        <dbReference type="ChEBI" id="CHEBI:30616"/>
        <dbReference type="ChEBI" id="CHEBI:33019"/>
        <dbReference type="ChEBI" id="CHEBI:57305"/>
        <dbReference type="ChEBI" id="CHEBI:78442"/>
        <dbReference type="ChEBI" id="CHEBI:78522"/>
        <dbReference type="ChEBI" id="CHEBI:456215"/>
        <dbReference type="EC" id="6.1.1.14"/>
    </reaction>
</comment>
<comment type="subunit">
    <text evidence="1">Tetramer of two alpha and two beta subunits.</text>
</comment>
<comment type="subcellular location">
    <subcellularLocation>
        <location evidence="1">Cytoplasm</location>
    </subcellularLocation>
</comment>
<comment type="similarity">
    <text evidence="2">Belongs to the class-II aminoacyl-tRNA synthetase family.</text>
</comment>